<comment type="function">
    <text>Cytotoxin and helminthotoxin with ribonuclease activity. Selectively chemotactic for dendritic cells. Possesses a wide variety of biological activities.</text>
</comment>
<comment type="subcellular location">
    <subcellularLocation>
        <location evidence="1">Cytoplasmic granule</location>
    </subcellularLocation>
    <text evidence="1">Matrix of eosinophil's large specific granule.</text>
</comment>
<comment type="domain">
    <text>The N-terminal region is necessary for mediating chemotactic activity.</text>
</comment>
<comment type="similarity">
    <text evidence="3">Belongs to the pancreatic ribonuclease family.</text>
</comment>
<dbReference type="EC" id="3.1.27.-"/>
<dbReference type="EMBL" id="U72031">
    <property type="protein sequence ID" value="AAB37785.1"/>
    <property type="molecule type" value="mRNA"/>
</dbReference>
<dbReference type="EMBL" id="AF306664">
    <property type="protein sequence ID" value="AAG25991.1"/>
    <property type="molecule type" value="Genomic_DNA"/>
</dbReference>
<dbReference type="EMBL" id="AF306665">
    <property type="protein sequence ID" value="AAG25992.1"/>
    <property type="molecule type" value="mRNA"/>
</dbReference>
<dbReference type="EMBL" id="BC065391">
    <property type="protein sequence ID" value="AAH65391.1"/>
    <property type="molecule type" value="mRNA"/>
</dbReference>
<dbReference type="EMBL" id="BC094626">
    <property type="protein sequence ID" value="AAH94626.1"/>
    <property type="molecule type" value="mRNA"/>
</dbReference>
<dbReference type="CCDS" id="CCDS26968.1"/>
<dbReference type="PIR" id="JC6160">
    <property type="entry name" value="JC6160"/>
</dbReference>
<dbReference type="RefSeq" id="NP_031921.1">
    <property type="nucleotide sequence ID" value="NM_007895.2"/>
</dbReference>
<dbReference type="SMR" id="P97425"/>
<dbReference type="FunCoup" id="P97425">
    <property type="interactions" value="432"/>
</dbReference>
<dbReference type="STRING" id="10090.ENSMUSP00000074386"/>
<dbReference type="GlyCosmos" id="P97425">
    <property type="glycosylation" value="3 sites, No reported glycans"/>
</dbReference>
<dbReference type="GlyGen" id="P97425">
    <property type="glycosylation" value="3 sites"/>
</dbReference>
<dbReference type="jPOST" id="P97425"/>
<dbReference type="PaxDb" id="10090-ENSMUSP00000074386"/>
<dbReference type="PeptideAtlas" id="P97425"/>
<dbReference type="ProteomicsDB" id="277543"/>
<dbReference type="DNASU" id="13587"/>
<dbReference type="Ensembl" id="ENSMUST00000074839.7">
    <property type="protein sequence ID" value="ENSMUSP00000074386.7"/>
    <property type="gene ID" value="ENSMUSG00000072596.5"/>
</dbReference>
<dbReference type="GeneID" id="13587"/>
<dbReference type="KEGG" id="mmu:13587"/>
<dbReference type="UCSC" id="uc007tdi.1">
    <property type="organism name" value="mouse"/>
</dbReference>
<dbReference type="AGR" id="MGI:108020"/>
<dbReference type="CTD" id="13587"/>
<dbReference type="MGI" id="MGI:108020">
    <property type="gene designation" value="Ear2"/>
</dbReference>
<dbReference type="VEuPathDB" id="HostDB:ENSMUSG00000072596"/>
<dbReference type="eggNOG" id="ENOG502TF52">
    <property type="taxonomic scope" value="Eukaryota"/>
</dbReference>
<dbReference type="GeneTree" id="ENSGT00940000162253"/>
<dbReference type="HOGENOM" id="CLU_117006_0_1_1"/>
<dbReference type="InParanoid" id="P97425"/>
<dbReference type="OMA" id="CKHINRG"/>
<dbReference type="OrthoDB" id="9450033at2759"/>
<dbReference type="PhylomeDB" id="P97425"/>
<dbReference type="TreeFam" id="TF333393"/>
<dbReference type="Reactome" id="R-MMU-6798695">
    <property type="pathway name" value="Neutrophil degranulation"/>
</dbReference>
<dbReference type="Reactome" id="R-MMU-6803157">
    <property type="pathway name" value="Antimicrobial peptides"/>
</dbReference>
<dbReference type="BioGRID-ORCS" id="13587">
    <property type="hits" value="2 hits in 41 CRISPR screens"/>
</dbReference>
<dbReference type="ChiTaRS" id="Ear2">
    <property type="organism name" value="mouse"/>
</dbReference>
<dbReference type="PRO" id="PR:P97425"/>
<dbReference type="Proteomes" id="UP000000589">
    <property type="component" value="Chromosome 14"/>
</dbReference>
<dbReference type="RNAct" id="P97425">
    <property type="molecule type" value="protein"/>
</dbReference>
<dbReference type="Bgee" id="ENSMUSG00000072596">
    <property type="expression patterns" value="Expressed in granulocyte and 30 other cell types or tissues"/>
</dbReference>
<dbReference type="ExpressionAtlas" id="P97425">
    <property type="expression patterns" value="baseline and differential"/>
</dbReference>
<dbReference type="GO" id="GO:0004519">
    <property type="term" value="F:endonuclease activity"/>
    <property type="evidence" value="ECO:0007669"/>
    <property type="project" value="UniProtKB-KW"/>
</dbReference>
<dbReference type="GO" id="GO:0003676">
    <property type="term" value="F:nucleic acid binding"/>
    <property type="evidence" value="ECO:0007669"/>
    <property type="project" value="InterPro"/>
</dbReference>
<dbReference type="GO" id="GO:0006935">
    <property type="term" value="P:chemotaxis"/>
    <property type="evidence" value="ECO:0000314"/>
    <property type="project" value="UniProtKB"/>
</dbReference>
<dbReference type="CDD" id="cd06265">
    <property type="entry name" value="RNase_A_canonical"/>
    <property type="match status" value="1"/>
</dbReference>
<dbReference type="FunFam" id="3.10.130.10:FF:000001">
    <property type="entry name" value="Ribonuclease pancreatic"/>
    <property type="match status" value="1"/>
</dbReference>
<dbReference type="Gene3D" id="3.10.130.10">
    <property type="entry name" value="Ribonuclease A-like domain"/>
    <property type="match status" value="1"/>
</dbReference>
<dbReference type="InterPro" id="IPR001427">
    <property type="entry name" value="RNaseA"/>
</dbReference>
<dbReference type="InterPro" id="IPR036816">
    <property type="entry name" value="RNaseA-like_dom_sf"/>
</dbReference>
<dbReference type="InterPro" id="IPR023411">
    <property type="entry name" value="RNaseA_AS"/>
</dbReference>
<dbReference type="InterPro" id="IPR023412">
    <property type="entry name" value="RNaseA_domain"/>
</dbReference>
<dbReference type="PANTHER" id="PTHR11437:SF3">
    <property type="entry name" value="EOSINOPHIL CATIONIC PROTEIN"/>
    <property type="match status" value="1"/>
</dbReference>
<dbReference type="PANTHER" id="PTHR11437">
    <property type="entry name" value="RIBONUCLEASE"/>
    <property type="match status" value="1"/>
</dbReference>
<dbReference type="Pfam" id="PF00074">
    <property type="entry name" value="RnaseA"/>
    <property type="match status" value="1"/>
</dbReference>
<dbReference type="PRINTS" id="PR00794">
    <property type="entry name" value="RIBONUCLEASE"/>
</dbReference>
<dbReference type="SMART" id="SM00092">
    <property type="entry name" value="RNAse_Pc"/>
    <property type="match status" value="1"/>
</dbReference>
<dbReference type="SUPFAM" id="SSF54076">
    <property type="entry name" value="RNase A-like"/>
    <property type="match status" value="1"/>
</dbReference>
<dbReference type="PROSITE" id="PS00127">
    <property type="entry name" value="RNASE_PANCREATIC"/>
    <property type="match status" value="1"/>
</dbReference>
<name>ECP2_MOUSE</name>
<feature type="signal peptide" evidence="2">
    <location>
        <begin position="1"/>
        <end position="25"/>
    </location>
</feature>
<feature type="chain" id="PRO_0000030868" description="Eosinophil cationic protein 2">
    <location>
        <begin position="26"/>
        <end position="156"/>
    </location>
</feature>
<feature type="active site" description="Proton acceptor" evidence="1">
    <location>
        <position position="38"/>
    </location>
</feature>
<feature type="active site" description="Proton donor" evidence="1">
    <location>
        <position position="151"/>
    </location>
</feature>
<feature type="binding site" evidence="1">
    <location>
        <begin position="62"/>
        <end position="66"/>
    </location>
    <ligand>
        <name>substrate</name>
    </ligand>
</feature>
<feature type="glycosylation site" description="N-linked (GlcNAc...) asparagine" evidence="1">
    <location>
        <position position="89"/>
    </location>
</feature>
<feature type="glycosylation site" description="N-linked (GlcNAc...) asparagine" evidence="2">
    <location>
        <position position="96"/>
    </location>
</feature>
<feature type="glycosylation site" description="N-linked (GlcNAc...) asparagine" evidence="1">
    <location>
        <position position="107"/>
    </location>
</feature>
<feature type="disulfide bond" evidence="1">
    <location>
        <begin position="47"/>
        <end position="106"/>
    </location>
</feature>
<feature type="disulfide bond" evidence="1">
    <location>
        <begin position="61"/>
        <end position="119"/>
    </location>
</feature>
<feature type="disulfide bond" evidence="1">
    <location>
        <begin position="79"/>
        <end position="134"/>
    </location>
</feature>
<feature type="disulfide bond" evidence="1">
    <location>
        <begin position="86"/>
        <end position="94"/>
    </location>
</feature>
<sequence length="156" mass="17620">MGPKLLESRLCLLLLLGLVLMLASCLGQTPSQWFAIQHINNNANLQCNVEMQRINRFRRTCKGLNTFLHTSFANAVGVCGNPSGLCSDNISRNCHNSSSRVRITVCNITSRRRTPYTQCRYQPRRSLEYYTVACNPRTPQDSPMYPVVPVHLDGTF</sequence>
<organism>
    <name type="scientific">Mus musculus</name>
    <name type="common">Mouse</name>
    <dbReference type="NCBI Taxonomy" id="10090"/>
    <lineage>
        <taxon>Eukaryota</taxon>
        <taxon>Metazoa</taxon>
        <taxon>Chordata</taxon>
        <taxon>Craniata</taxon>
        <taxon>Vertebrata</taxon>
        <taxon>Euteleostomi</taxon>
        <taxon>Mammalia</taxon>
        <taxon>Eutheria</taxon>
        <taxon>Euarchontoglires</taxon>
        <taxon>Glires</taxon>
        <taxon>Rodentia</taxon>
        <taxon>Myomorpha</taxon>
        <taxon>Muroidea</taxon>
        <taxon>Muridae</taxon>
        <taxon>Murinae</taxon>
        <taxon>Mus</taxon>
        <taxon>Mus</taxon>
    </lineage>
</organism>
<keyword id="KW-0145">Chemotaxis</keyword>
<keyword id="KW-1015">Disulfide bond</keyword>
<keyword id="KW-0255">Endonuclease</keyword>
<keyword id="KW-0325">Glycoprotein</keyword>
<keyword id="KW-0378">Hydrolase</keyword>
<keyword id="KW-0540">Nuclease</keyword>
<keyword id="KW-1185">Reference proteome</keyword>
<keyword id="KW-0732">Signal</keyword>
<gene>
    <name type="primary">Ear2</name>
    <name type="synonym">Rnase2</name>
</gene>
<evidence type="ECO:0000250" key="1"/>
<evidence type="ECO:0000255" key="2"/>
<evidence type="ECO:0000305" key="3"/>
<reference key="1">
    <citation type="journal article" date="1996" name="Proc. Natl. Acad. Sci. U.S.A.">
        <title>Two highly homologous ribonuclease genes expressed in mouse eosinophils identify a larger subgroup of the mammalian ribonuclease superfamily.</title>
        <authorList>
            <person name="Larson K.A."/>
            <person name="Olson E.V."/>
            <person name="Madden B.J."/>
            <person name="Gleich G.J."/>
            <person name="Lee N.A."/>
            <person name="Lee J.J."/>
        </authorList>
    </citation>
    <scope>NUCLEOTIDE SEQUENCE [MRNA]</scope>
    <source>
        <strain>C57BL/6J</strain>
    </source>
</reference>
<reference key="2">
    <citation type="journal article" date="2001" name="Gene">
        <title>Gene structure and enzymatic activity of mouse eosinophil-associated ribonuclease 2.</title>
        <authorList>
            <person name="McDevitt A.L."/>
            <person name="Deming M.S."/>
            <person name="Rosenberg H.F."/>
            <person name="Dyer K.D."/>
        </authorList>
    </citation>
    <scope>NUCLEOTIDE SEQUENCE [GENOMIC DNA / MRNA]</scope>
</reference>
<reference key="3">
    <citation type="journal article" date="2004" name="Genome Res.">
        <title>The status, quality, and expansion of the NIH full-length cDNA project: the Mammalian Gene Collection (MGC).</title>
        <authorList>
            <consortium name="The MGC Project Team"/>
        </authorList>
    </citation>
    <scope>NUCLEOTIDE SEQUENCE [LARGE SCALE MRNA]</scope>
    <source>
        <tissue>Mammary gland</tissue>
    </source>
</reference>
<reference key="4">
    <citation type="journal article" date="2003" name="Blood">
        <title>Eosinophil-derived neurotoxin (EDN), an antimicrobial protein with chemotactic activities for dendritic cells.</title>
        <authorList>
            <person name="Yang D."/>
            <person name="Rosenberg H.F."/>
            <person name="Chen Q."/>
            <person name="Dyer K.D."/>
            <person name="Kurosaka K."/>
            <person name="Oppenheim J.J."/>
        </authorList>
    </citation>
    <scope>INVOLVEMENT IN CHEMOTAXIS</scope>
</reference>
<accession>P97425</accession>
<accession>Q505C0</accession>
<protein>
    <recommendedName>
        <fullName>Eosinophil cationic protein 2</fullName>
        <shortName>ECP 2</shortName>
        <ecNumber>3.1.27.-</ecNumber>
    </recommendedName>
    <alternativeName>
        <fullName>Eosinophil secondary granule ribonuclease 2</fullName>
        <shortName>EAR-2</shortName>
    </alternativeName>
    <alternativeName>
        <fullName>Ribonuclease 3-2</fullName>
        <shortName>RNase 3-2</shortName>
    </alternativeName>
</protein>
<proteinExistence type="evidence at transcript level"/>